<protein>
    <recommendedName>
        <fullName evidence="1">GTP cyclohydrolase FolE2</fullName>
        <ecNumber evidence="1">3.5.4.16</ecNumber>
    </recommendedName>
</protein>
<dbReference type="EC" id="3.5.4.16" evidence="1"/>
<dbReference type="EMBL" id="CP000271">
    <property type="protein sequence ID" value="ABE33169.1"/>
    <property type="molecule type" value="Genomic_DNA"/>
</dbReference>
<dbReference type="RefSeq" id="WP_011490545.1">
    <property type="nucleotide sequence ID" value="NC_007952.1"/>
</dbReference>
<dbReference type="SMR" id="Q13RX0"/>
<dbReference type="STRING" id="266265.Bxe_B2826"/>
<dbReference type="KEGG" id="bxb:DR64_5155"/>
<dbReference type="KEGG" id="bxe:Bxe_B2826"/>
<dbReference type="PATRIC" id="fig|266265.5.peg.4867"/>
<dbReference type="eggNOG" id="COG1469">
    <property type="taxonomic scope" value="Bacteria"/>
</dbReference>
<dbReference type="OrthoDB" id="9774824at2"/>
<dbReference type="UniPathway" id="UPA00848">
    <property type="reaction ID" value="UER00151"/>
</dbReference>
<dbReference type="Proteomes" id="UP000001817">
    <property type="component" value="Chromosome 2"/>
</dbReference>
<dbReference type="GO" id="GO:0003934">
    <property type="term" value="F:GTP cyclohydrolase I activity"/>
    <property type="evidence" value="ECO:0007669"/>
    <property type="project" value="UniProtKB-UniRule"/>
</dbReference>
<dbReference type="GO" id="GO:0046654">
    <property type="term" value="P:tetrahydrofolate biosynthetic process"/>
    <property type="evidence" value="ECO:0007669"/>
    <property type="project" value="UniProtKB-UniRule"/>
</dbReference>
<dbReference type="Gene3D" id="3.10.270.10">
    <property type="entry name" value="Urate Oxidase"/>
    <property type="match status" value="1"/>
</dbReference>
<dbReference type="HAMAP" id="MF_01527_B">
    <property type="entry name" value="GTP_cyclohydrol_B"/>
    <property type="match status" value="1"/>
</dbReference>
<dbReference type="InterPro" id="IPR022838">
    <property type="entry name" value="GTP_cyclohydrolase_FolE2"/>
</dbReference>
<dbReference type="InterPro" id="IPR003801">
    <property type="entry name" value="GTP_cyclohydrolase_FolE2/MptA"/>
</dbReference>
<dbReference type="NCBIfam" id="NF010200">
    <property type="entry name" value="PRK13674.1-1"/>
    <property type="match status" value="1"/>
</dbReference>
<dbReference type="PANTHER" id="PTHR36445">
    <property type="entry name" value="GTP CYCLOHYDROLASE MPTA"/>
    <property type="match status" value="1"/>
</dbReference>
<dbReference type="PANTHER" id="PTHR36445:SF1">
    <property type="entry name" value="GTP CYCLOHYDROLASE MPTA"/>
    <property type="match status" value="1"/>
</dbReference>
<dbReference type="Pfam" id="PF02649">
    <property type="entry name" value="GCHY-1"/>
    <property type="match status" value="1"/>
</dbReference>
<sequence>MNQMNPAFVMPDVQSTPDTRQIPIQRVGVKAVRHPLTVRTQGGEVQPTVGTWNLDVHLPADQKGTHMSRFVALLEENKAPLEPATFRTMLAAMLEKLEAEAGRIEVSFPYFVNKTAPVSGVQSLLDYEVTLTGETRNGATRLFLRVRVPVTSLCPCSKKISQYGAHNQRSHVTINAELAGDVAVEELIRIAEEEASCELWGLLKRPDEKFVTERAYENPKFVEDLVRDVAQRLNADERIVAYVLEAENFESIHNHSAYAVIERDKRAG</sequence>
<accession>Q13RX0</accession>
<gene>
    <name evidence="1" type="primary">folE2</name>
    <name type="ordered locus">Bxeno_B0201</name>
    <name type="ORF">Bxe_B2826</name>
</gene>
<keyword id="KW-0378">Hydrolase</keyword>
<keyword id="KW-1185">Reference proteome</keyword>
<reference key="1">
    <citation type="journal article" date="2006" name="Proc. Natl. Acad. Sci. U.S.A.">
        <title>Burkholderia xenovorans LB400 harbors a multi-replicon, 9.73-Mbp genome shaped for versatility.</title>
        <authorList>
            <person name="Chain P.S.G."/>
            <person name="Denef V.J."/>
            <person name="Konstantinidis K.T."/>
            <person name="Vergez L.M."/>
            <person name="Agullo L."/>
            <person name="Reyes V.L."/>
            <person name="Hauser L."/>
            <person name="Cordova M."/>
            <person name="Gomez L."/>
            <person name="Gonzalez M."/>
            <person name="Land M."/>
            <person name="Lao V."/>
            <person name="Larimer F."/>
            <person name="LiPuma J.J."/>
            <person name="Mahenthiralingam E."/>
            <person name="Malfatti S.A."/>
            <person name="Marx C.J."/>
            <person name="Parnell J.J."/>
            <person name="Ramette A."/>
            <person name="Richardson P."/>
            <person name="Seeger M."/>
            <person name="Smith D."/>
            <person name="Spilker T."/>
            <person name="Sul W.J."/>
            <person name="Tsoi T.V."/>
            <person name="Ulrich L.E."/>
            <person name="Zhulin I.B."/>
            <person name="Tiedje J.M."/>
        </authorList>
    </citation>
    <scope>NUCLEOTIDE SEQUENCE [LARGE SCALE GENOMIC DNA]</scope>
    <source>
        <strain>LB400</strain>
    </source>
</reference>
<proteinExistence type="inferred from homology"/>
<feature type="chain" id="PRO_0000289484" description="GTP cyclohydrolase FolE2">
    <location>
        <begin position="1"/>
        <end position="268"/>
    </location>
</feature>
<feature type="site" description="May be catalytically important" evidence="1">
    <location>
        <position position="154"/>
    </location>
</feature>
<organism>
    <name type="scientific">Paraburkholderia xenovorans (strain LB400)</name>
    <dbReference type="NCBI Taxonomy" id="266265"/>
    <lineage>
        <taxon>Bacteria</taxon>
        <taxon>Pseudomonadati</taxon>
        <taxon>Pseudomonadota</taxon>
        <taxon>Betaproteobacteria</taxon>
        <taxon>Burkholderiales</taxon>
        <taxon>Burkholderiaceae</taxon>
        <taxon>Paraburkholderia</taxon>
    </lineage>
</organism>
<evidence type="ECO:0000255" key="1">
    <source>
        <dbReference type="HAMAP-Rule" id="MF_01527"/>
    </source>
</evidence>
<comment type="function">
    <text evidence="1">Converts GTP to 7,8-dihydroneopterin triphosphate.</text>
</comment>
<comment type="catalytic activity">
    <reaction evidence="1">
        <text>GTP + H2O = 7,8-dihydroneopterin 3'-triphosphate + formate + H(+)</text>
        <dbReference type="Rhea" id="RHEA:17473"/>
        <dbReference type="ChEBI" id="CHEBI:15377"/>
        <dbReference type="ChEBI" id="CHEBI:15378"/>
        <dbReference type="ChEBI" id="CHEBI:15740"/>
        <dbReference type="ChEBI" id="CHEBI:37565"/>
        <dbReference type="ChEBI" id="CHEBI:58462"/>
        <dbReference type="EC" id="3.5.4.16"/>
    </reaction>
</comment>
<comment type="pathway">
    <text evidence="1">Cofactor biosynthesis; 7,8-dihydroneopterin triphosphate biosynthesis; 7,8-dihydroneopterin triphosphate from GTP: step 1/1.</text>
</comment>
<comment type="similarity">
    <text evidence="1">Belongs to the GTP cyclohydrolase IV family.</text>
</comment>
<name>GCH4_PARXL</name>